<name>RL19_SYNP6</name>
<organism>
    <name type="scientific">Synechococcus sp. (strain ATCC 27144 / PCC 6301 / SAUG 1402/1)</name>
    <name type="common">Anacystis nidulans</name>
    <dbReference type="NCBI Taxonomy" id="269084"/>
    <lineage>
        <taxon>Bacteria</taxon>
        <taxon>Bacillati</taxon>
        <taxon>Cyanobacteriota</taxon>
        <taxon>Cyanophyceae</taxon>
        <taxon>Synechococcales</taxon>
        <taxon>Synechococcaceae</taxon>
        <taxon>Synechococcus</taxon>
    </lineage>
</organism>
<protein>
    <recommendedName>
        <fullName evidence="1">Large ribosomal subunit protein bL19</fullName>
    </recommendedName>
    <alternativeName>
        <fullName evidence="2">50S ribosomal protein L19</fullName>
    </alternativeName>
</protein>
<feature type="chain" id="PRO_0000163553" description="Large ribosomal subunit protein bL19">
    <location>
        <begin position="1"/>
        <end position="120"/>
    </location>
</feature>
<keyword id="KW-0687">Ribonucleoprotein</keyword>
<keyword id="KW-0689">Ribosomal protein</keyword>
<sequence length="120" mass="13444">MGAQEIIRSIEAEYTKSDLPTIYVGDTVKVGVRIQEGGKERVQPYEGVVIANSGGGINESITVRRIFQGVGVERVFLLHSPAVASVQVLRRGRVRRAKLYYLRDRVGKATRVKQRFDRSI</sequence>
<gene>
    <name evidence="1" type="primary">rplS</name>
    <name evidence="1" type="synonym">rpl19</name>
    <name type="ordered locus">syc1569_c</name>
</gene>
<evidence type="ECO:0000255" key="1">
    <source>
        <dbReference type="HAMAP-Rule" id="MF_00402"/>
    </source>
</evidence>
<evidence type="ECO:0000305" key="2"/>
<proteinExistence type="inferred from homology"/>
<dbReference type="EMBL" id="AP008231">
    <property type="protein sequence ID" value="BAD79759.1"/>
    <property type="status" value="ALT_INIT"/>
    <property type="molecule type" value="Genomic_DNA"/>
</dbReference>
<dbReference type="RefSeq" id="WP_039755904.1">
    <property type="nucleotide sequence ID" value="NZ_CP085785.1"/>
</dbReference>
<dbReference type="SMR" id="Q5N1R1"/>
<dbReference type="GeneID" id="72431432"/>
<dbReference type="KEGG" id="syc:syc1569_c"/>
<dbReference type="eggNOG" id="COG0335">
    <property type="taxonomic scope" value="Bacteria"/>
</dbReference>
<dbReference type="Proteomes" id="UP000001175">
    <property type="component" value="Chromosome"/>
</dbReference>
<dbReference type="GO" id="GO:0022625">
    <property type="term" value="C:cytosolic large ribosomal subunit"/>
    <property type="evidence" value="ECO:0007669"/>
    <property type="project" value="TreeGrafter"/>
</dbReference>
<dbReference type="GO" id="GO:0003735">
    <property type="term" value="F:structural constituent of ribosome"/>
    <property type="evidence" value="ECO:0007669"/>
    <property type="project" value="InterPro"/>
</dbReference>
<dbReference type="GO" id="GO:0006412">
    <property type="term" value="P:translation"/>
    <property type="evidence" value="ECO:0007669"/>
    <property type="project" value="UniProtKB-UniRule"/>
</dbReference>
<dbReference type="FunFam" id="2.30.30.790:FF:000001">
    <property type="entry name" value="50S ribosomal protein L19"/>
    <property type="match status" value="1"/>
</dbReference>
<dbReference type="Gene3D" id="2.30.30.790">
    <property type="match status" value="1"/>
</dbReference>
<dbReference type="HAMAP" id="MF_00402">
    <property type="entry name" value="Ribosomal_bL19"/>
    <property type="match status" value="1"/>
</dbReference>
<dbReference type="InterPro" id="IPR001857">
    <property type="entry name" value="Ribosomal_bL19"/>
</dbReference>
<dbReference type="InterPro" id="IPR018257">
    <property type="entry name" value="Ribosomal_bL19_CS"/>
</dbReference>
<dbReference type="InterPro" id="IPR038657">
    <property type="entry name" value="Ribosomal_bL19_sf"/>
</dbReference>
<dbReference type="InterPro" id="IPR008991">
    <property type="entry name" value="Translation_prot_SH3-like_sf"/>
</dbReference>
<dbReference type="NCBIfam" id="TIGR01024">
    <property type="entry name" value="rplS_bact"/>
    <property type="match status" value="1"/>
</dbReference>
<dbReference type="PANTHER" id="PTHR15680:SF9">
    <property type="entry name" value="LARGE RIBOSOMAL SUBUNIT PROTEIN BL19M"/>
    <property type="match status" value="1"/>
</dbReference>
<dbReference type="PANTHER" id="PTHR15680">
    <property type="entry name" value="RIBOSOMAL PROTEIN L19"/>
    <property type="match status" value="1"/>
</dbReference>
<dbReference type="Pfam" id="PF01245">
    <property type="entry name" value="Ribosomal_L19"/>
    <property type="match status" value="1"/>
</dbReference>
<dbReference type="PIRSF" id="PIRSF002191">
    <property type="entry name" value="Ribosomal_L19"/>
    <property type="match status" value="1"/>
</dbReference>
<dbReference type="PRINTS" id="PR00061">
    <property type="entry name" value="RIBOSOMALL19"/>
</dbReference>
<dbReference type="SUPFAM" id="SSF50104">
    <property type="entry name" value="Translation proteins SH3-like domain"/>
    <property type="match status" value="1"/>
</dbReference>
<dbReference type="PROSITE" id="PS01015">
    <property type="entry name" value="RIBOSOMAL_L19"/>
    <property type="match status" value="1"/>
</dbReference>
<reference key="1">
    <citation type="journal article" date="2007" name="Photosyn. Res.">
        <title>Complete nucleotide sequence of the freshwater unicellular cyanobacterium Synechococcus elongatus PCC 6301 chromosome: gene content and organization.</title>
        <authorList>
            <person name="Sugita C."/>
            <person name="Ogata K."/>
            <person name="Shikata M."/>
            <person name="Jikuya H."/>
            <person name="Takano J."/>
            <person name="Furumichi M."/>
            <person name="Kanehisa M."/>
            <person name="Omata T."/>
            <person name="Sugiura M."/>
            <person name="Sugita M."/>
        </authorList>
    </citation>
    <scope>NUCLEOTIDE SEQUENCE [LARGE SCALE GENOMIC DNA]</scope>
    <source>
        <strain>ATCC 27144 / PCC 6301 / SAUG 1402/1</strain>
    </source>
</reference>
<accession>Q5N1R1</accession>
<comment type="function">
    <text evidence="1">This protein is located at the 30S-50S ribosomal subunit interface and may play a role in the structure and function of the aminoacyl-tRNA binding site.</text>
</comment>
<comment type="similarity">
    <text evidence="1">Belongs to the bacterial ribosomal protein bL19 family.</text>
</comment>
<comment type="sequence caution" evidence="2">
    <conflict type="erroneous initiation">
        <sequence resource="EMBL-CDS" id="BAD79759"/>
    </conflict>
</comment>